<comment type="catalytic activity">
    <reaction>
        <text>a primary alcohol + NAD(+) = an aldehyde + NADH + H(+)</text>
        <dbReference type="Rhea" id="RHEA:10736"/>
        <dbReference type="ChEBI" id="CHEBI:15378"/>
        <dbReference type="ChEBI" id="CHEBI:15734"/>
        <dbReference type="ChEBI" id="CHEBI:17478"/>
        <dbReference type="ChEBI" id="CHEBI:57540"/>
        <dbReference type="ChEBI" id="CHEBI:57945"/>
        <dbReference type="EC" id="1.1.1.1"/>
    </reaction>
</comment>
<comment type="catalytic activity">
    <reaction>
        <text>a secondary alcohol + NAD(+) = a ketone + NADH + H(+)</text>
        <dbReference type="Rhea" id="RHEA:10740"/>
        <dbReference type="ChEBI" id="CHEBI:15378"/>
        <dbReference type="ChEBI" id="CHEBI:17087"/>
        <dbReference type="ChEBI" id="CHEBI:35681"/>
        <dbReference type="ChEBI" id="CHEBI:57540"/>
        <dbReference type="ChEBI" id="CHEBI:57945"/>
        <dbReference type="EC" id="1.1.1.1"/>
    </reaction>
</comment>
<comment type="cofactor">
    <cofactor evidence="1">
        <name>Zn(2+)</name>
        <dbReference type="ChEBI" id="CHEBI:29105"/>
    </cofactor>
    <text evidence="1">Binds 1 zinc ion per subunit.</text>
</comment>
<comment type="similarity">
    <text evidence="2">Belongs to the zinc-containing alcohol dehydrogenase family.</text>
</comment>
<dbReference type="EC" id="1.1.1.1"/>
<dbReference type="EMBL" id="AF031940">
    <property type="protein sequence ID" value="AAB87463.1"/>
    <property type="molecule type" value="Genomic_DNA"/>
</dbReference>
<dbReference type="EMBL" id="AE006469">
    <property type="protein sequence ID" value="AAK65362.1"/>
    <property type="molecule type" value="Genomic_DNA"/>
</dbReference>
<dbReference type="PIR" id="H95349">
    <property type="entry name" value="H95349"/>
</dbReference>
<dbReference type="RefSeq" id="NP_435950.1">
    <property type="nucleotide sequence ID" value="NC_003037.1"/>
</dbReference>
<dbReference type="SMR" id="O31186"/>
<dbReference type="EnsemblBacteria" id="AAK65362">
    <property type="protein sequence ID" value="AAK65362"/>
    <property type="gene ID" value="SMa1296"/>
</dbReference>
<dbReference type="KEGG" id="sme:SMa1296"/>
<dbReference type="PATRIC" id="fig|266834.11.peg.726"/>
<dbReference type="HOGENOM" id="CLU_026673_20_1_5"/>
<dbReference type="OrthoDB" id="9806940at2"/>
<dbReference type="PRO" id="PR:O31186"/>
<dbReference type="Proteomes" id="UP000001976">
    <property type="component" value="Plasmid pSymA"/>
</dbReference>
<dbReference type="GO" id="GO:0004022">
    <property type="term" value="F:alcohol dehydrogenase (NAD+) activity"/>
    <property type="evidence" value="ECO:0007669"/>
    <property type="project" value="UniProtKB-EC"/>
</dbReference>
<dbReference type="GO" id="GO:0008270">
    <property type="term" value="F:zinc ion binding"/>
    <property type="evidence" value="ECO:0007669"/>
    <property type="project" value="InterPro"/>
</dbReference>
<dbReference type="CDD" id="cd08297">
    <property type="entry name" value="CAD3"/>
    <property type="match status" value="1"/>
</dbReference>
<dbReference type="FunFam" id="3.40.50.720:FF:000039">
    <property type="entry name" value="Alcohol dehydrogenase AdhP"/>
    <property type="match status" value="1"/>
</dbReference>
<dbReference type="FunFam" id="3.90.180.10:FF:000002">
    <property type="entry name" value="Alcohol dehydrogenase AdhP"/>
    <property type="match status" value="1"/>
</dbReference>
<dbReference type="Gene3D" id="3.90.180.10">
    <property type="entry name" value="Medium-chain alcohol dehydrogenases, catalytic domain"/>
    <property type="match status" value="1"/>
</dbReference>
<dbReference type="Gene3D" id="3.40.50.720">
    <property type="entry name" value="NAD(P)-binding Rossmann-like Domain"/>
    <property type="match status" value="1"/>
</dbReference>
<dbReference type="InterPro" id="IPR013149">
    <property type="entry name" value="ADH-like_C"/>
</dbReference>
<dbReference type="InterPro" id="IPR013154">
    <property type="entry name" value="ADH-like_N"/>
</dbReference>
<dbReference type="InterPro" id="IPR002328">
    <property type="entry name" value="ADH_Zn_CS"/>
</dbReference>
<dbReference type="InterPro" id="IPR011032">
    <property type="entry name" value="GroES-like_sf"/>
</dbReference>
<dbReference type="InterPro" id="IPR036291">
    <property type="entry name" value="NAD(P)-bd_dom_sf"/>
</dbReference>
<dbReference type="InterPro" id="IPR020843">
    <property type="entry name" value="PKS_ER"/>
</dbReference>
<dbReference type="NCBIfam" id="NF006940">
    <property type="entry name" value="PRK09422.1"/>
    <property type="match status" value="1"/>
</dbReference>
<dbReference type="PANTHER" id="PTHR42940">
    <property type="entry name" value="ALCOHOL DEHYDROGENASE 1-RELATED"/>
    <property type="match status" value="1"/>
</dbReference>
<dbReference type="PANTHER" id="PTHR42940:SF8">
    <property type="entry name" value="VACUOLAR PROTEIN SORTING-ASSOCIATED PROTEIN 11"/>
    <property type="match status" value="1"/>
</dbReference>
<dbReference type="Pfam" id="PF08240">
    <property type="entry name" value="ADH_N"/>
    <property type="match status" value="1"/>
</dbReference>
<dbReference type="Pfam" id="PF00107">
    <property type="entry name" value="ADH_zinc_N"/>
    <property type="match status" value="1"/>
</dbReference>
<dbReference type="SMART" id="SM00829">
    <property type="entry name" value="PKS_ER"/>
    <property type="match status" value="1"/>
</dbReference>
<dbReference type="SUPFAM" id="SSF50129">
    <property type="entry name" value="GroES-like"/>
    <property type="match status" value="1"/>
</dbReference>
<dbReference type="SUPFAM" id="SSF51735">
    <property type="entry name" value="NAD(P)-binding Rossmann-fold domains"/>
    <property type="match status" value="1"/>
</dbReference>
<dbReference type="PROSITE" id="PS00059">
    <property type="entry name" value="ADH_ZINC"/>
    <property type="match status" value="1"/>
</dbReference>
<feature type="chain" id="PRO_0000160748" description="Alcohol dehydrogenase">
    <location>
        <begin position="1"/>
        <end position="340"/>
    </location>
</feature>
<feature type="binding site" evidence="1">
    <location>
        <position position="40"/>
    </location>
    <ligand>
        <name>Zn(2+)</name>
        <dbReference type="ChEBI" id="CHEBI:29105"/>
        <note>catalytic</note>
    </ligand>
</feature>
<feature type="binding site" evidence="1">
    <location>
        <position position="63"/>
    </location>
    <ligand>
        <name>Zn(2+)</name>
        <dbReference type="ChEBI" id="CHEBI:29105"/>
        <note>catalytic</note>
    </ligand>
</feature>
<protein>
    <recommendedName>
        <fullName>Alcohol dehydrogenase</fullName>
        <ecNumber>1.1.1.1</ecNumber>
    </recommendedName>
</protein>
<name>ADHA_RHIME</name>
<keyword id="KW-0479">Metal-binding</keyword>
<keyword id="KW-0520">NAD</keyword>
<keyword id="KW-0560">Oxidoreductase</keyword>
<keyword id="KW-0614">Plasmid</keyword>
<keyword id="KW-1185">Reference proteome</keyword>
<keyword id="KW-0862">Zinc</keyword>
<geneLocation type="plasmid">
    <name>pSymA</name>
    <name>megaplasmid 1</name>
</geneLocation>
<proteinExistence type="inferred from homology"/>
<evidence type="ECO:0000250" key="1"/>
<evidence type="ECO:0000305" key="2"/>
<organism>
    <name type="scientific">Rhizobium meliloti (strain 1021)</name>
    <name type="common">Ensifer meliloti</name>
    <name type="synonym">Sinorhizobium meliloti</name>
    <dbReference type="NCBI Taxonomy" id="266834"/>
    <lineage>
        <taxon>Bacteria</taxon>
        <taxon>Pseudomonadati</taxon>
        <taxon>Pseudomonadota</taxon>
        <taxon>Alphaproteobacteria</taxon>
        <taxon>Hyphomicrobiales</taxon>
        <taxon>Rhizobiaceae</taxon>
        <taxon>Sinorhizobium/Ensifer group</taxon>
        <taxon>Sinorhizobium</taxon>
    </lineage>
</organism>
<reference key="1">
    <citation type="journal article" date="1998" name="Biochim. Biophys. Acta">
        <title>Identification of the Rhizobium meliloti alcohol dehydrogenase gene (adhA) and heterologous expression in Alcaligenes eutrophus.</title>
        <authorList>
            <person name="Willis L.B."/>
            <person name="Walker G.C."/>
        </authorList>
    </citation>
    <scope>NUCLEOTIDE SEQUENCE [GENOMIC DNA]</scope>
    <source>
        <strain>1021</strain>
    </source>
</reference>
<reference key="2">
    <citation type="journal article" date="2001" name="Proc. Natl. Acad. Sci. U.S.A.">
        <title>Nucleotide sequence and predicted functions of the entire Sinorhizobium meliloti pSymA megaplasmid.</title>
        <authorList>
            <person name="Barnett M.J."/>
            <person name="Fisher R.F."/>
            <person name="Jones T."/>
            <person name="Komp C."/>
            <person name="Abola A.P."/>
            <person name="Barloy-Hubler F."/>
            <person name="Bowser L."/>
            <person name="Capela D."/>
            <person name="Galibert F."/>
            <person name="Gouzy J."/>
            <person name="Gurjal M."/>
            <person name="Hong A."/>
            <person name="Huizar L."/>
            <person name="Hyman R.W."/>
            <person name="Kahn D."/>
            <person name="Kahn M.L."/>
            <person name="Kalman S."/>
            <person name="Keating D.H."/>
            <person name="Palm C."/>
            <person name="Peck M.C."/>
            <person name="Surzycki R."/>
            <person name="Wells D.H."/>
            <person name="Yeh K.-C."/>
            <person name="Davis R.W."/>
            <person name="Federspiel N.A."/>
            <person name="Long S.R."/>
        </authorList>
    </citation>
    <scope>NUCLEOTIDE SEQUENCE [LARGE SCALE GENOMIC DNA]</scope>
    <source>
        <strain>1021</strain>
    </source>
</reference>
<reference key="3">
    <citation type="journal article" date="2001" name="Science">
        <title>The composite genome of the legume symbiont Sinorhizobium meliloti.</title>
        <authorList>
            <person name="Galibert F."/>
            <person name="Finan T.M."/>
            <person name="Long S.R."/>
            <person name="Puehler A."/>
            <person name="Abola P."/>
            <person name="Ampe F."/>
            <person name="Barloy-Hubler F."/>
            <person name="Barnett M.J."/>
            <person name="Becker A."/>
            <person name="Boistard P."/>
            <person name="Bothe G."/>
            <person name="Boutry M."/>
            <person name="Bowser L."/>
            <person name="Buhrmester J."/>
            <person name="Cadieu E."/>
            <person name="Capela D."/>
            <person name="Chain P."/>
            <person name="Cowie A."/>
            <person name="Davis R.W."/>
            <person name="Dreano S."/>
            <person name="Federspiel N.A."/>
            <person name="Fisher R.F."/>
            <person name="Gloux S."/>
            <person name="Godrie T."/>
            <person name="Goffeau A."/>
            <person name="Golding B."/>
            <person name="Gouzy J."/>
            <person name="Gurjal M."/>
            <person name="Hernandez-Lucas I."/>
            <person name="Hong A."/>
            <person name="Huizar L."/>
            <person name="Hyman R.W."/>
            <person name="Jones T."/>
            <person name="Kahn D."/>
            <person name="Kahn M.L."/>
            <person name="Kalman S."/>
            <person name="Keating D.H."/>
            <person name="Kiss E."/>
            <person name="Komp C."/>
            <person name="Lelaure V."/>
            <person name="Masuy D."/>
            <person name="Palm C."/>
            <person name="Peck M.C."/>
            <person name="Pohl T.M."/>
            <person name="Portetelle D."/>
            <person name="Purnelle B."/>
            <person name="Ramsperger U."/>
            <person name="Surzycki R."/>
            <person name="Thebault P."/>
            <person name="Vandenbol M."/>
            <person name="Vorhoelter F.J."/>
            <person name="Weidner S."/>
            <person name="Wells D.H."/>
            <person name="Wong K."/>
            <person name="Yeh K.-C."/>
            <person name="Batut J."/>
        </authorList>
    </citation>
    <scope>NUCLEOTIDE SEQUENCE [LARGE SCALE GENOMIC DNA]</scope>
    <source>
        <strain>1021</strain>
    </source>
</reference>
<sequence length="340" mass="36235">MTMTAAVVREFGKPLVIEEVPVPQPGPGQVLIKYEATGVCHTDLHAAKGDWPVRPNPPFIPGHEGVGYVAKLGAEVTRLKEGDRVGVPWLHTACGCCTPCRTGWETLCGSQQNTGYSVDGTFAQYGLADPDFVGRLPARLEFGPAAPVLCAGVTVYKGLKETEVRPGEWVLVSGIGGLGHMAVQYAKAMGMHVAAADIFPDKLALAEKLGADLVVDARAPDAVEEVQRRTGGLHGALVTAVSPKAMEQAYSMLRSKGTMALVGLPPGQICLPVFDTVLKRITVRGSIVGTRQDLEEALEFAGEGKVAAHFSWDKIENINAIFERMEEGKIDGRIVLDLNG</sequence>
<accession>O31186</accession>
<gene>
    <name type="primary">adhA</name>
    <name type="ordered locus">RA0704</name>
    <name type="ORF">SMa1296</name>
</gene>